<dbReference type="EC" id="1.17.7.4" evidence="1"/>
<dbReference type="EMBL" id="FM180568">
    <property type="protein sequence ID" value="CAS07577.1"/>
    <property type="molecule type" value="Genomic_DNA"/>
</dbReference>
<dbReference type="RefSeq" id="WP_001166403.1">
    <property type="nucleotide sequence ID" value="NC_011601.1"/>
</dbReference>
<dbReference type="SMR" id="B7UI74"/>
<dbReference type="KEGG" id="ecg:E2348C_0029"/>
<dbReference type="HOGENOM" id="CLU_027486_1_0_6"/>
<dbReference type="UniPathway" id="UPA00056">
    <property type="reaction ID" value="UER00097"/>
</dbReference>
<dbReference type="UniPathway" id="UPA00059">
    <property type="reaction ID" value="UER00105"/>
</dbReference>
<dbReference type="Proteomes" id="UP000008205">
    <property type="component" value="Chromosome"/>
</dbReference>
<dbReference type="GO" id="GO:0051539">
    <property type="term" value="F:4 iron, 4 sulfur cluster binding"/>
    <property type="evidence" value="ECO:0007669"/>
    <property type="project" value="UniProtKB-UniRule"/>
</dbReference>
<dbReference type="GO" id="GO:0051745">
    <property type="term" value="F:4-hydroxy-3-methylbut-2-enyl diphosphate reductase activity"/>
    <property type="evidence" value="ECO:0007669"/>
    <property type="project" value="UniProtKB-UniRule"/>
</dbReference>
<dbReference type="GO" id="GO:0046872">
    <property type="term" value="F:metal ion binding"/>
    <property type="evidence" value="ECO:0007669"/>
    <property type="project" value="UniProtKB-KW"/>
</dbReference>
<dbReference type="GO" id="GO:0050992">
    <property type="term" value="P:dimethylallyl diphosphate biosynthetic process"/>
    <property type="evidence" value="ECO:0007669"/>
    <property type="project" value="UniProtKB-UniRule"/>
</dbReference>
<dbReference type="GO" id="GO:0019288">
    <property type="term" value="P:isopentenyl diphosphate biosynthetic process, methylerythritol 4-phosphate pathway"/>
    <property type="evidence" value="ECO:0007669"/>
    <property type="project" value="UniProtKB-UniRule"/>
</dbReference>
<dbReference type="GO" id="GO:0016114">
    <property type="term" value="P:terpenoid biosynthetic process"/>
    <property type="evidence" value="ECO:0007669"/>
    <property type="project" value="UniProtKB-UniRule"/>
</dbReference>
<dbReference type="CDD" id="cd13944">
    <property type="entry name" value="lytB_ispH"/>
    <property type="match status" value="1"/>
</dbReference>
<dbReference type="FunFam" id="3.40.1010.20:FF:000001">
    <property type="entry name" value="4-hydroxy-3-methylbut-2-enyl diphosphate reductase"/>
    <property type="match status" value="1"/>
</dbReference>
<dbReference type="FunFam" id="3.40.50.11270:FF:000001">
    <property type="entry name" value="4-hydroxy-3-methylbut-2-enyl diphosphate reductase"/>
    <property type="match status" value="1"/>
</dbReference>
<dbReference type="Gene3D" id="3.40.50.11270">
    <property type="match status" value="1"/>
</dbReference>
<dbReference type="Gene3D" id="3.40.1010.20">
    <property type="entry name" value="4-hydroxy-3-methylbut-2-enyl diphosphate reductase, catalytic domain"/>
    <property type="match status" value="2"/>
</dbReference>
<dbReference type="HAMAP" id="MF_00191">
    <property type="entry name" value="IspH"/>
    <property type="match status" value="1"/>
</dbReference>
<dbReference type="InterPro" id="IPR003451">
    <property type="entry name" value="LytB/IspH"/>
</dbReference>
<dbReference type="NCBIfam" id="TIGR00216">
    <property type="entry name" value="ispH_lytB"/>
    <property type="match status" value="1"/>
</dbReference>
<dbReference type="NCBIfam" id="NF002188">
    <property type="entry name" value="PRK01045.1-2"/>
    <property type="match status" value="1"/>
</dbReference>
<dbReference type="NCBIfam" id="NF002190">
    <property type="entry name" value="PRK01045.1-4"/>
    <property type="match status" value="1"/>
</dbReference>
<dbReference type="PANTHER" id="PTHR30426">
    <property type="entry name" value="4-HYDROXY-3-METHYLBUT-2-ENYL DIPHOSPHATE REDUCTASE"/>
    <property type="match status" value="1"/>
</dbReference>
<dbReference type="PANTHER" id="PTHR30426:SF0">
    <property type="entry name" value="4-HYDROXY-3-METHYLBUT-2-ENYL DIPHOSPHATE REDUCTASE"/>
    <property type="match status" value="1"/>
</dbReference>
<dbReference type="Pfam" id="PF02401">
    <property type="entry name" value="LYTB"/>
    <property type="match status" value="1"/>
</dbReference>
<comment type="function">
    <text evidence="1">Catalyzes the conversion of 1-hydroxy-2-methyl-2-(E)-butenyl 4-diphosphate (HMBPP) into a mixture of isopentenyl diphosphate (IPP) and dimethylallyl diphosphate (DMAPP). Acts in the terminal step of the DOXP/MEP pathway for isoprenoid precursor biosynthesis.</text>
</comment>
<comment type="catalytic activity">
    <reaction evidence="1">
        <text>isopentenyl diphosphate + 2 oxidized [2Fe-2S]-[ferredoxin] + H2O = (2E)-4-hydroxy-3-methylbut-2-enyl diphosphate + 2 reduced [2Fe-2S]-[ferredoxin] + 2 H(+)</text>
        <dbReference type="Rhea" id="RHEA:24488"/>
        <dbReference type="Rhea" id="RHEA-COMP:10000"/>
        <dbReference type="Rhea" id="RHEA-COMP:10001"/>
        <dbReference type="ChEBI" id="CHEBI:15377"/>
        <dbReference type="ChEBI" id="CHEBI:15378"/>
        <dbReference type="ChEBI" id="CHEBI:33737"/>
        <dbReference type="ChEBI" id="CHEBI:33738"/>
        <dbReference type="ChEBI" id="CHEBI:128753"/>
        <dbReference type="ChEBI" id="CHEBI:128769"/>
        <dbReference type="EC" id="1.17.7.4"/>
    </reaction>
</comment>
<comment type="catalytic activity">
    <reaction evidence="1">
        <text>dimethylallyl diphosphate + 2 oxidized [2Fe-2S]-[ferredoxin] + H2O = (2E)-4-hydroxy-3-methylbut-2-enyl diphosphate + 2 reduced [2Fe-2S]-[ferredoxin] + 2 H(+)</text>
        <dbReference type="Rhea" id="RHEA:24825"/>
        <dbReference type="Rhea" id="RHEA-COMP:10000"/>
        <dbReference type="Rhea" id="RHEA-COMP:10001"/>
        <dbReference type="ChEBI" id="CHEBI:15377"/>
        <dbReference type="ChEBI" id="CHEBI:15378"/>
        <dbReference type="ChEBI" id="CHEBI:33737"/>
        <dbReference type="ChEBI" id="CHEBI:33738"/>
        <dbReference type="ChEBI" id="CHEBI:57623"/>
        <dbReference type="ChEBI" id="CHEBI:128753"/>
        <dbReference type="EC" id="1.17.7.4"/>
    </reaction>
</comment>
<comment type="cofactor">
    <cofactor evidence="1">
        <name>[4Fe-4S] cluster</name>
        <dbReference type="ChEBI" id="CHEBI:49883"/>
    </cofactor>
    <text evidence="1">Binds 1 [4Fe-4S] cluster per subunit.</text>
</comment>
<comment type="pathway">
    <text evidence="1">Isoprenoid biosynthesis; dimethylallyl diphosphate biosynthesis; dimethylallyl diphosphate from (2E)-4-hydroxy-3-methylbutenyl diphosphate: step 1/1.</text>
</comment>
<comment type="pathway">
    <text evidence="1">Isoprenoid biosynthesis; isopentenyl diphosphate biosynthesis via DXP pathway; isopentenyl diphosphate from 1-deoxy-D-xylulose 5-phosphate: step 6/6.</text>
</comment>
<comment type="subunit">
    <text evidence="1">Homodimer.</text>
</comment>
<comment type="similarity">
    <text evidence="1">Belongs to the IspH family.</text>
</comment>
<name>ISPH_ECO27</name>
<protein>
    <recommendedName>
        <fullName evidence="1">4-hydroxy-3-methylbut-2-enyl diphosphate reductase</fullName>
        <shortName evidence="1">HMBPP reductase</shortName>
        <ecNumber evidence="1">1.17.7.4</ecNumber>
    </recommendedName>
</protein>
<proteinExistence type="inferred from homology"/>
<evidence type="ECO:0000255" key="1">
    <source>
        <dbReference type="HAMAP-Rule" id="MF_00191"/>
    </source>
</evidence>
<organism>
    <name type="scientific">Escherichia coli O127:H6 (strain E2348/69 / EPEC)</name>
    <dbReference type="NCBI Taxonomy" id="574521"/>
    <lineage>
        <taxon>Bacteria</taxon>
        <taxon>Pseudomonadati</taxon>
        <taxon>Pseudomonadota</taxon>
        <taxon>Gammaproteobacteria</taxon>
        <taxon>Enterobacterales</taxon>
        <taxon>Enterobacteriaceae</taxon>
        <taxon>Escherichia</taxon>
    </lineage>
</organism>
<accession>B7UI74</accession>
<reference key="1">
    <citation type="journal article" date="2009" name="J. Bacteriol.">
        <title>Complete genome sequence and comparative genome analysis of enteropathogenic Escherichia coli O127:H6 strain E2348/69.</title>
        <authorList>
            <person name="Iguchi A."/>
            <person name="Thomson N.R."/>
            <person name="Ogura Y."/>
            <person name="Saunders D."/>
            <person name="Ooka T."/>
            <person name="Henderson I.R."/>
            <person name="Harris D."/>
            <person name="Asadulghani M."/>
            <person name="Kurokawa K."/>
            <person name="Dean P."/>
            <person name="Kenny B."/>
            <person name="Quail M.A."/>
            <person name="Thurston S."/>
            <person name="Dougan G."/>
            <person name="Hayashi T."/>
            <person name="Parkhill J."/>
            <person name="Frankel G."/>
        </authorList>
    </citation>
    <scope>NUCLEOTIDE SEQUENCE [LARGE SCALE GENOMIC DNA]</scope>
    <source>
        <strain>E2348/69 / EPEC</strain>
    </source>
</reference>
<gene>
    <name evidence="1" type="primary">ispH</name>
    <name type="ordered locus">E2348C_0029</name>
</gene>
<keyword id="KW-0004">4Fe-4S</keyword>
<keyword id="KW-0408">Iron</keyword>
<keyword id="KW-0411">Iron-sulfur</keyword>
<keyword id="KW-0414">Isoprene biosynthesis</keyword>
<keyword id="KW-0479">Metal-binding</keyword>
<keyword id="KW-0560">Oxidoreductase</keyword>
<keyword id="KW-1185">Reference proteome</keyword>
<sequence>MQILLANPRGFCAGVDRAISIVENALAIYGAPIYVRHEVVHNRYVVDSLRERGAIFIEQISEVPDGAILIFSAHGVSQAVRNEAKSRDLTVFDATCPLVTKVHMEVARASRRGEESILIGHAGHPEVEGTMGQYSNPEGGMYLVESPDDVWKLTVKNEEKLSFMTQTTLSVDDTSDVIDALRKRFPKIVGPRKDDICYATTNRQEAVRALAEQAEVVLVVGSKNSSNSNRLAELAQRMGKRAFLIDDATDIQEEWVKEAKCVGVTAGASAPDILVQNVVARLQQLGGGEAIPLEGREENIVFEVPKELRVDIREVD</sequence>
<feature type="chain" id="PRO_1000124283" description="4-hydroxy-3-methylbut-2-enyl diphosphate reductase">
    <location>
        <begin position="1"/>
        <end position="316"/>
    </location>
</feature>
<feature type="active site" description="Proton donor" evidence="1">
    <location>
        <position position="126"/>
    </location>
</feature>
<feature type="binding site" evidence="1">
    <location>
        <position position="12"/>
    </location>
    <ligand>
        <name>[4Fe-4S] cluster</name>
        <dbReference type="ChEBI" id="CHEBI:49883"/>
    </ligand>
</feature>
<feature type="binding site" evidence="1">
    <location>
        <position position="41"/>
    </location>
    <ligand>
        <name>(2E)-4-hydroxy-3-methylbut-2-enyl diphosphate</name>
        <dbReference type="ChEBI" id="CHEBI:128753"/>
    </ligand>
</feature>
<feature type="binding site" evidence="1">
    <location>
        <position position="41"/>
    </location>
    <ligand>
        <name>dimethylallyl diphosphate</name>
        <dbReference type="ChEBI" id="CHEBI:57623"/>
    </ligand>
</feature>
<feature type="binding site" evidence="1">
    <location>
        <position position="41"/>
    </location>
    <ligand>
        <name>isopentenyl diphosphate</name>
        <dbReference type="ChEBI" id="CHEBI:128769"/>
    </ligand>
</feature>
<feature type="binding site" evidence="1">
    <location>
        <position position="74"/>
    </location>
    <ligand>
        <name>(2E)-4-hydroxy-3-methylbut-2-enyl diphosphate</name>
        <dbReference type="ChEBI" id="CHEBI:128753"/>
    </ligand>
</feature>
<feature type="binding site" evidence="1">
    <location>
        <position position="74"/>
    </location>
    <ligand>
        <name>dimethylallyl diphosphate</name>
        <dbReference type="ChEBI" id="CHEBI:57623"/>
    </ligand>
</feature>
<feature type="binding site" evidence="1">
    <location>
        <position position="74"/>
    </location>
    <ligand>
        <name>isopentenyl diphosphate</name>
        <dbReference type="ChEBI" id="CHEBI:128769"/>
    </ligand>
</feature>
<feature type="binding site" evidence="1">
    <location>
        <position position="96"/>
    </location>
    <ligand>
        <name>[4Fe-4S] cluster</name>
        <dbReference type="ChEBI" id="CHEBI:49883"/>
    </ligand>
</feature>
<feature type="binding site" evidence="1">
    <location>
        <position position="124"/>
    </location>
    <ligand>
        <name>(2E)-4-hydroxy-3-methylbut-2-enyl diphosphate</name>
        <dbReference type="ChEBI" id="CHEBI:128753"/>
    </ligand>
</feature>
<feature type="binding site" evidence="1">
    <location>
        <position position="124"/>
    </location>
    <ligand>
        <name>dimethylallyl diphosphate</name>
        <dbReference type="ChEBI" id="CHEBI:57623"/>
    </ligand>
</feature>
<feature type="binding site" evidence="1">
    <location>
        <position position="124"/>
    </location>
    <ligand>
        <name>isopentenyl diphosphate</name>
        <dbReference type="ChEBI" id="CHEBI:128769"/>
    </ligand>
</feature>
<feature type="binding site" evidence="1">
    <location>
        <position position="167"/>
    </location>
    <ligand>
        <name>(2E)-4-hydroxy-3-methylbut-2-enyl diphosphate</name>
        <dbReference type="ChEBI" id="CHEBI:128753"/>
    </ligand>
</feature>
<feature type="binding site" evidence="1">
    <location>
        <position position="197"/>
    </location>
    <ligand>
        <name>[4Fe-4S] cluster</name>
        <dbReference type="ChEBI" id="CHEBI:49883"/>
    </ligand>
</feature>
<feature type="binding site" evidence="1">
    <location>
        <position position="225"/>
    </location>
    <ligand>
        <name>(2E)-4-hydroxy-3-methylbut-2-enyl diphosphate</name>
        <dbReference type="ChEBI" id="CHEBI:128753"/>
    </ligand>
</feature>
<feature type="binding site" evidence="1">
    <location>
        <position position="225"/>
    </location>
    <ligand>
        <name>dimethylallyl diphosphate</name>
        <dbReference type="ChEBI" id="CHEBI:57623"/>
    </ligand>
</feature>
<feature type="binding site" evidence="1">
    <location>
        <position position="225"/>
    </location>
    <ligand>
        <name>isopentenyl diphosphate</name>
        <dbReference type="ChEBI" id="CHEBI:128769"/>
    </ligand>
</feature>
<feature type="binding site" evidence="1">
    <location>
        <position position="226"/>
    </location>
    <ligand>
        <name>(2E)-4-hydroxy-3-methylbut-2-enyl diphosphate</name>
        <dbReference type="ChEBI" id="CHEBI:128753"/>
    </ligand>
</feature>
<feature type="binding site" evidence="1">
    <location>
        <position position="226"/>
    </location>
    <ligand>
        <name>dimethylallyl diphosphate</name>
        <dbReference type="ChEBI" id="CHEBI:57623"/>
    </ligand>
</feature>
<feature type="binding site" evidence="1">
    <location>
        <position position="226"/>
    </location>
    <ligand>
        <name>isopentenyl diphosphate</name>
        <dbReference type="ChEBI" id="CHEBI:128769"/>
    </ligand>
</feature>
<feature type="binding site" evidence="1">
    <location>
        <position position="227"/>
    </location>
    <ligand>
        <name>(2E)-4-hydroxy-3-methylbut-2-enyl diphosphate</name>
        <dbReference type="ChEBI" id="CHEBI:128753"/>
    </ligand>
</feature>
<feature type="binding site" evidence="1">
    <location>
        <position position="227"/>
    </location>
    <ligand>
        <name>dimethylallyl diphosphate</name>
        <dbReference type="ChEBI" id="CHEBI:57623"/>
    </ligand>
</feature>
<feature type="binding site" evidence="1">
    <location>
        <position position="227"/>
    </location>
    <ligand>
        <name>isopentenyl diphosphate</name>
        <dbReference type="ChEBI" id="CHEBI:128769"/>
    </ligand>
</feature>
<feature type="binding site" evidence="1">
    <location>
        <position position="269"/>
    </location>
    <ligand>
        <name>(2E)-4-hydroxy-3-methylbut-2-enyl diphosphate</name>
        <dbReference type="ChEBI" id="CHEBI:128753"/>
    </ligand>
</feature>
<feature type="binding site" evidence="1">
    <location>
        <position position="269"/>
    </location>
    <ligand>
        <name>dimethylallyl diphosphate</name>
        <dbReference type="ChEBI" id="CHEBI:57623"/>
    </ligand>
</feature>
<feature type="binding site" evidence="1">
    <location>
        <position position="269"/>
    </location>
    <ligand>
        <name>isopentenyl diphosphate</name>
        <dbReference type="ChEBI" id="CHEBI:128769"/>
    </ligand>
</feature>